<name>ARGC_METM7</name>
<keyword id="KW-0028">Amino-acid biosynthesis</keyword>
<keyword id="KW-0055">Arginine biosynthesis</keyword>
<keyword id="KW-0963">Cytoplasm</keyword>
<keyword id="KW-0521">NADP</keyword>
<keyword id="KW-0560">Oxidoreductase</keyword>
<accession>A6VIA5</accession>
<organism>
    <name type="scientific">Methanococcus maripaludis (strain C7 / ATCC BAA-1331)</name>
    <dbReference type="NCBI Taxonomy" id="426368"/>
    <lineage>
        <taxon>Archaea</taxon>
        <taxon>Methanobacteriati</taxon>
        <taxon>Methanobacteriota</taxon>
        <taxon>Methanomada group</taxon>
        <taxon>Methanococci</taxon>
        <taxon>Methanococcales</taxon>
        <taxon>Methanococcaceae</taxon>
        <taxon>Methanococcus</taxon>
    </lineage>
</organism>
<comment type="function">
    <text evidence="1">Catalyzes the NADPH-dependent reduction of N-acetyl-5-glutamyl phosphate to yield N-acetyl-L-glutamate 5-semialdehyde.</text>
</comment>
<comment type="catalytic activity">
    <reaction evidence="1">
        <text>N-acetyl-L-glutamate 5-semialdehyde + phosphate + NADP(+) = N-acetyl-L-glutamyl 5-phosphate + NADPH + H(+)</text>
        <dbReference type="Rhea" id="RHEA:21588"/>
        <dbReference type="ChEBI" id="CHEBI:15378"/>
        <dbReference type="ChEBI" id="CHEBI:29123"/>
        <dbReference type="ChEBI" id="CHEBI:43474"/>
        <dbReference type="ChEBI" id="CHEBI:57783"/>
        <dbReference type="ChEBI" id="CHEBI:57936"/>
        <dbReference type="ChEBI" id="CHEBI:58349"/>
        <dbReference type="EC" id="1.2.1.38"/>
    </reaction>
</comment>
<comment type="pathway">
    <text evidence="1">Amino-acid biosynthesis; L-arginine biosynthesis; N(2)-acetyl-L-ornithine from L-glutamate: step 3/4.</text>
</comment>
<comment type="subcellular location">
    <subcellularLocation>
        <location evidence="1">Cytoplasm</location>
    </subcellularLocation>
</comment>
<comment type="similarity">
    <text evidence="1">Belongs to the NAGSA dehydrogenase family. Type 1 subfamily.</text>
</comment>
<gene>
    <name evidence="1" type="primary">argC</name>
    <name type="ordered locus">MmarC7_1115</name>
</gene>
<protein>
    <recommendedName>
        <fullName evidence="1">N-acetyl-gamma-glutamyl-phosphate reductase</fullName>
        <shortName evidence="1">AGPR</shortName>
        <ecNumber evidence="1">1.2.1.38</ecNumber>
    </recommendedName>
    <alternativeName>
        <fullName evidence="1">N-acetyl-glutamate semialdehyde dehydrogenase</fullName>
        <shortName evidence="1">NAGSA dehydrogenase</shortName>
    </alternativeName>
</protein>
<evidence type="ECO:0000255" key="1">
    <source>
        <dbReference type="HAMAP-Rule" id="MF_00150"/>
    </source>
</evidence>
<dbReference type="EC" id="1.2.1.38" evidence="1"/>
<dbReference type="EMBL" id="CP000745">
    <property type="protein sequence ID" value="ABR66181.1"/>
    <property type="molecule type" value="Genomic_DNA"/>
</dbReference>
<dbReference type="SMR" id="A6VIA5"/>
<dbReference type="STRING" id="426368.MmarC7_1115"/>
<dbReference type="KEGG" id="mmz:MmarC7_1115"/>
<dbReference type="eggNOG" id="arCOG00495">
    <property type="taxonomic scope" value="Archaea"/>
</dbReference>
<dbReference type="HOGENOM" id="CLU_006384_0_1_2"/>
<dbReference type="OrthoDB" id="372053at2157"/>
<dbReference type="UniPathway" id="UPA00068">
    <property type="reaction ID" value="UER00108"/>
</dbReference>
<dbReference type="GO" id="GO:0005737">
    <property type="term" value="C:cytoplasm"/>
    <property type="evidence" value="ECO:0007669"/>
    <property type="project" value="UniProtKB-SubCell"/>
</dbReference>
<dbReference type="GO" id="GO:0003942">
    <property type="term" value="F:N-acetyl-gamma-glutamyl-phosphate reductase activity"/>
    <property type="evidence" value="ECO:0007669"/>
    <property type="project" value="UniProtKB-UniRule"/>
</dbReference>
<dbReference type="GO" id="GO:0051287">
    <property type="term" value="F:NAD binding"/>
    <property type="evidence" value="ECO:0007669"/>
    <property type="project" value="InterPro"/>
</dbReference>
<dbReference type="GO" id="GO:0070401">
    <property type="term" value="F:NADP+ binding"/>
    <property type="evidence" value="ECO:0007669"/>
    <property type="project" value="InterPro"/>
</dbReference>
<dbReference type="GO" id="GO:0006526">
    <property type="term" value="P:L-arginine biosynthetic process"/>
    <property type="evidence" value="ECO:0007669"/>
    <property type="project" value="UniProtKB-UniRule"/>
</dbReference>
<dbReference type="CDD" id="cd23934">
    <property type="entry name" value="AGPR_1_C"/>
    <property type="match status" value="1"/>
</dbReference>
<dbReference type="CDD" id="cd17895">
    <property type="entry name" value="AGPR_1_N"/>
    <property type="match status" value="1"/>
</dbReference>
<dbReference type="FunFam" id="3.30.360.10:FF:000014">
    <property type="entry name" value="N-acetyl-gamma-glutamyl-phosphate reductase"/>
    <property type="match status" value="1"/>
</dbReference>
<dbReference type="Gene3D" id="3.30.360.10">
    <property type="entry name" value="Dihydrodipicolinate Reductase, domain 2"/>
    <property type="match status" value="1"/>
</dbReference>
<dbReference type="Gene3D" id="3.40.50.720">
    <property type="entry name" value="NAD(P)-binding Rossmann-like Domain"/>
    <property type="match status" value="1"/>
</dbReference>
<dbReference type="HAMAP" id="MF_00150">
    <property type="entry name" value="ArgC_type1"/>
    <property type="match status" value="1"/>
</dbReference>
<dbReference type="InterPro" id="IPR023013">
    <property type="entry name" value="AGPR_AS"/>
</dbReference>
<dbReference type="InterPro" id="IPR000706">
    <property type="entry name" value="AGPR_type-1"/>
</dbReference>
<dbReference type="InterPro" id="IPR036291">
    <property type="entry name" value="NAD(P)-bd_dom_sf"/>
</dbReference>
<dbReference type="InterPro" id="IPR050085">
    <property type="entry name" value="NAGSA_dehydrogenase"/>
</dbReference>
<dbReference type="InterPro" id="IPR000534">
    <property type="entry name" value="Semialdehyde_DH_NAD-bd"/>
</dbReference>
<dbReference type="NCBIfam" id="TIGR01850">
    <property type="entry name" value="argC"/>
    <property type="match status" value="1"/>
</dbReference>
<dbReference type="PANTHER" id="PTHR32338:SF10">
    <property type="entry name" value="N-ACETYL-GAMMA-GLUTAMYL-PHOSPHATE REDUCTASE, CHLOROPLASTIC-RELATED"/>
    <property type="match status" value="1"/>
</dbReference>
<dbReference type="PANTHER" id="PTHR32338">
    <property type="entry name" value="N-ACETYL-GAMMA-GLUTAMYL-PHOSPHATE REDUCTASE, CHLOROPLASTIC-RELATED-RELATED"/>
    <property type="match status" value="1"/>
</dbReference>
<dbReference type="Pfam" id="PF01118">
    <property type="entry name" value="Semialdhyde_dh"/>
    <property type="match status" value="1"/>
</dbReference>
<dbReference type="Pfam" id="PF22698">
    <property type="entry name" value="Semialdhyde_dhC_1"/>
    <property type="match status" value="1"/>
</dbReference>
<dbReference type="SMART" id="SM00859">
    <property type="entry name" value="Semialdhyde_dh"/>
    <property type="match status" value="1"/>
</dbReference>
<dbReference type="SUPFAM" id="SSF55347">
    <property type="entry name" value="Glyceraldehyde-3-phosphate dehydrogenase-like, C-terminal domain"/>
    <property type="match status" value="1"/>
</dbReference>
<dbReference type="SUPFAM" id="SSF51735">
    <property type="entry name" value="NAD(P)-binding Rossmann-fold domains"/>
    <property type="match status" value="1"/>
</dbReference>
<dbReference type="PROSITE" id="PS01224">
    <property type="entry name" value="ARGC"/>
    <property type="match status" value="1"/>
</dbReference>
<reference key="1">
    <citation type="submission" date="2007-06" db="EMBL/GenBank/DDBJ databases">
        <title>Complete sequence of Methanococcus maripaludis C7.</title>
        <authorList>
            <consortium name="US DOE Joint Genome Institute"/>
            <person name="Copeland A."/>
            <person name="Lucas S."/>
            <person name="Lapidus A."/>
            <person name="Barry K."/>
            <person name="Glavina del Rio T."/>
            <person name="Dalin E."/>
            <person name="Tice H."/>
            <person name="Pitluck S."/>
            <person name="Clum A."/>
            <person name="Schmutz J."/>
            <person name="Larimer F."/>
            <person name="Land M."/>
            <person name="Hauser L."/>
            <person name="Kyrpides N."/>
            <person name="Anderson I."/>
            <person name="Sieprawska-Lupa M."/>
            <person name="Whitman W.B."/>
            <person name="Richardson P."/>
        </authorList>
    </citation>
    <scope>NUCLEOTIDE SEQUENCE [LARGE SCALE GENOMIC DNA]</scope>
    <source>
        <strain>C7 / ATCC BAA-1331</strain>
    </source>
</reference>
<feature type="chain" id="PRO_1000011013" description="N-acetyl-gamma-glutamyl-phosphate reductase">
    <location>
        <begin position="1"/>
        <end position="343"/>
    </location>
</feature>
<feature type="active site" evidence="1">
    <location>
        <position position="149"/>
    </location>
</feature>
<sequence>MKTVSIIGGTGYTGSELLRLLSTHEKVEVLNVTSRKEAGKKLTDFHPQVRNLRNYNDLEFQNIAPEDIDTDIVFCATPHGASMAIVPILHEKGINIIDLSGDYRFEDIEMYESWYGLKHTGKIESAVYGLPELHREKIKKSKTIANPGCYPTGAILSMAPLVANDLVDERIIFDSKSGVSGAGVEASQTTHFPNVNENLGAYKITKHRHSPEIGKELEYLGNKKLKVSFTPHLLPVTRGILTTAHSYLKEDVSRADVIEIYEEFYDGEFFVRIFEEGMVSLTGVRGTNFCDIGGFEIDQHGRIVVVSAIDNLVKGASGQAIQNMNIIMGFDEKMGLSVGGMRP</sequence>
<proteinExistence type="inferred from homology"/>